<keyword id="KW-0186">Copper</keyword>
<keyword id="KW-0903">Direct protein sequencing</keyword>
<keyword id="KW-0561">Oxygen transport</keyword>
<keyword id="KW-0964">Secreted</keyword>
<keyword id="KW-0813">Transport</keyword>
<proteinExistence type="evidence at protein level"/>
<accession>P83175</accession>
<reference evidence="3" key="1">
    <citation type="journal article" date="1989" name="Comp. Biochem. Physiol.">
        <title>The relationship between N-terminal sequences and immunological characterization of crustacean hemocyanins.</title>
        <authorList>
            <person name="Neuteboom B."/>
            <person name="Sierdsema S.J."/>
            <person name="Beintema J.J."/>
        </authorList>
    </citation>
    <scope>PROTEIN SEQUENCE</scope>
    <source>
        <tissue>Hemolymph</tissue>
    </source>
</reference>
<sequence length="37" mass="4221">ADLAHRQQSVNRLLYKIYSPISSAYAELKQLSTDNXD</sequence>
<evidence type="ECO:0000269" key="1">
    <source>
    </source>
</evidence>
<evidence type="ECO:0000303" key="2">
    <source>
    </source>
</evidence>
<evidence type="ECO:0000305" key="3"/>
<organism evidence="3">
    <name type="scientific">Cancer pagurus</name>
    <name type="common">Rock crab</name>
    <dbReference type="NCBI Taxonomy" id="6755"/>
    <lineage>
        <taxon>Eukaryota</taxon>
        <taxon>Metazoa</taxon>
        <taxon>Ecdysozoa</taxon>
        <taxon>Arthropoda</taxon>
        <taxon>Crustacea</taxon>
        <taxon>Multicrustacea</taxon>
        <taxon>Malacostraca</taxon>
        <taxon>Eumalacostraca</taxon>
        <taxon>Eucarida</taxon>
        <taxon>Decapoda</taxon>
        <taxon>Pleocyemata</taxon>
        <taxon>Brachyura</taxon>
        <taxon>Eubrachyura</taxon>
        <taxon>Cancroidea</taxon>
        <taxon>Cancridae</taxon>
        <taxon>Cancer</taxon>
    </lineage>
</organism>
<dbReference type="PIR" id="B60529">
    <property type="entry name" value="B60529"/>
</dbReference>
<dbReference type="GO" id="GO:0005576">
    <property type="term" value="C:extracellular region"/>
    <property type="evidence" value="ECO:0007669"/>
    <property type="project" value="UniProtKB-SubCell"/>
</dbReference>
<dbReference type="GO" id="GO:0005344">
    <property type="term" value="F:oxygen carrier activity"/>
    <property type="evidence" value="ECO:0000314"/>
    <property type="project" value="UniProtKB"/>
</dbReference>
<dbReference type="GO" id="GO:0015671">
    <property type="term" value="P:oxygen transport"/>
    <property type="evidence" value="ECO:0000304"/>
    <property type="project" value="UniProtKB"/>
</dbReference>
<name>HCYB_CANPG</name>
<feature type="chain" id="PRO_0000204255" description="Hemocyanin subunit B">
    <location>
        <begin position="1"/>
        <end position="37" status="greater than"/>
    </location>
</feature>
<feature type="non-terminal residue" evidence="2">
    <location>
        <position position="37"/>
    </location>
</feature>
<protein>
    <recommendedName>
        <fullName>Hemocyanin subunit B</fullName>
    </recommendedName>
</protein>
<comment type="function">
    <text evidence="1">Hemocyanins are copper-containing oxygen carriers occurring freely dissolved in the hemolymph of many mollusks and arthropods.</text>
</comment>
<comment type="subcellular location">
    <subcellularLocation>
        <location>Secreted</location>
        <location>Extracellular space</location>
    </subcellularLocation>
</comment>
<comment type="tissue specificity">
    <text>Hemolymph.</text>
</comment>
<comment type="similarity">
    <text evidence="3">Belongs to the tyrosinase family. Hemocyanin subfamily.</text>
</comment>